<protein>
    <recommendedName>
        <fullName evidence="1">Peptide chain release factor 3</fullName>
        <shortName evidence="1">RF-3</shortName>
    </recommendedName>
</protein>
<organism>
    <name type="scientific">Staphylococcus epidermidis (strain ATCC 12228 / FDA PCI 1200)</name>
    <dbReference type="NCBI Taxonomy" id="176280"/>
    <lineage>
        <taxon>Bacteria</taxon>
        <taxon>Bacillati</taxon>
        <taxon>Bacillota</taxon>
        <taxon>Bacilli</taxon>
        <taxon>Bacillales</taxon>
        <taxon>Staphylococcaceae</taxon>
        <taxon>Staphylococcus</taxon>
    </lineage>
</organism>
<proteinExistence type="inferred from homology"/>
<sequence>MNLKEEIESRKTFAIISHPDAGKTTLTEKLLYFSGAIREAGTVKGKKTGKFATSDWMKVEQERGISVTSSVMQFDYDDYKINILDTPGHEDFSEDTYRTLMAVDSAVMVIDCAKGIEPQTLKLFKVCKMRGIPIFTFINKLDRVGKEPFELLDEIEETLNIDTYPMNWPVGMGQNFFGIIDRHSKTIEPFRDEENLLHLNEDYELKEEHAIKNDSAFEQAIEEMMLVDEAGEAFDNEALLNGELTPVFFGSALANFGVQNFLNAYVDHAPMPNARQTKEEVDVSPFDTDFSGFIFKIQANMDPKHRDRIAFMRVVSGAFERGMDVTLQRTNKKQKITRSTSFMADDKETVNHAVAGDIIGLYDTGNYQIGDTLVGGKQKYSFQELPQFTPEIFMKVSAKNVMKQKHFHKGIEQLVQEGAIQYYKTLHTNQIILGAVGQLQFEVFEHRMNNEYNVDVVMEPVGRKIARWIENEEDIKDNMNTSRSILVKDRYDNYVFLFENEFATRWFEEKFSDIKLYSLL</sequence>
<name>RF3_STAES</name>
<feature type="chain" id="PRO_0000210967" description="Peptide chain release factor 3">
    <location>
        <begin position="1"/>
        <end position="520"/>
    </location>
</feature>
<feature type="domain" description="tr-type G">
    <location>
        <begin position="8"/>
        <end position="277"/>
    </location>
</feature>
<feature type="binding site" evidence="1">
    <location>
        <begin position="17"/>
        <end position="24"/>
    </location>
    <ligand>
        <name>GTP</name>
        <dbReference type="ChEBI" id="CHEBI:37565"/>
    </ligand>
</feature>
<feature type="binding site" evidence="1">
    <location>
        <begin position="85"/>
        <end position="89"/>
    </location>
    <ligand>
        <name>GTP</name>
        <dbReference type="ChEBI" id="CHEBI:37565"/>
    </ligand>
</feature>
<feature type="binding site" evidence="1">
    <location>
        <begin position="139"/>
        <end position="142"/>
    </location>
    <ligand>
        <name>GTP</name>
        <dbReference type="ChEBI" id="CHEBI:37565"/>
    </ligand>
</feature>
<evidence type="ECO:0000255" key="1">
    <source>
        <dbReference type="HAMAP-Rule" id="MF_00072"/>
    </source>
</evidence>
<reference key="1">
    <citation type="journal article" date="2003" name="Mol. Microbiol.">
        <title>Genome-based analysis of virulence genes in a non-biofilm-forming Staphylococcus epidermidis strain (ATCC 12228).</title>
        <authorList>
            <person name="Zhang Y.-Q."/>
            <person name="Ren S.-X."/>
            <person name="Li H.-L."/>
            <person name="Wang Y.-X."/>
            <person name="Fu G."/>
            <person name="Yang J."/>
            <person name="Qin Z.-Q."/>
            <person name="Miao Y.-G."/>
            <person name="Wang W.-Y."/>
            <person name="Chen R.-S."/>
            <person name="Shen Y."/>
            <person name="Chen Z."/>
            <person name="Yuan Z.-H."/>
            <person name="Zhao G.-P."/>
            <person name="Qu D."/>
            <person name="Danchin A."/>
            <person name="Wen Y.-M."/>
        </authorList>
    </citation>
    <scope>NUCLEOTIDE SEQUENCE [LARGE SCALE GENOMIC DNA]</scope>
    <source>
        <strain>ATCC 12228 / FDA PCI 1200</strain>
    </source>
</reference>
<comment type="function">
    <text evidence="1">Increases the formation of ribosomal termination complexes and stimulates activities of RF-1 and RF-2. It binds guanine nucleotides and has strong preference for UGA stop codons. It may interact directly with the ribosome. The stimulation of RF-1 and RF-2 is significantly reduced by GTP and GDP, but not by GMP.</text>
</comment>
<comment type="subcellular location">
    <subcellularLocation>
        <location evidence="1">Cytoplasm</location>
    </subcellularLocation>
</comment>
<comment type="similarity">
    <text evidence="1">Belongs to the TRAFAC class translation factor GTPase superfamily. Classic translation factor GTPase family. PrfC subfamily.</text>
</comment>
<keyword id="KW-0963">Cytoplasm</keyword>
<keyword id="KW-0342">GTP-binding</keyword>
<keyword id="KW-0547">Nucleotide-binding</keyword>
<keyword id="KW-0648">Protein biosynthesis</keyword>
<dbReference type="EMBL" id="AE015929">
    <property type="protein sequence ID" value="AAO04317.1"/>
    <property type="molecule type" value="Genomic_DNA"/>
</dbReference>
<dbReference type="RefSeq" id="NP_764275.1">
    <property type="nucleotide sequence ID" value="NC_004461.1"/>
</dbReference>
<dbReference type="RefSeq" id="WP_002446117.1">
    <property type="nucleotide sequence ID" value="NZ_WBME01000019.1"/>
</dbReference>
<dbReference type="SMR" id="Q8CPR1"/>
<dbReference type="KEGG" id="sep:SE_0720"/>
<dbReference type="PATRIC" id="fig|176280.10.peg.694"/>
<dbReference type="eggNOG" id="COG4108">
    <property type="taxonomic scope" value="Bacteria"/>
</dbReference>
<dbReference type="HOGENOM" id="CLU_002794_2_1_9"/>
<dbReference type="OrthoDB" id="9804431at2"/>
<dbReference type="Proteomes" id="UP000001411">
    <property type="component" value="Chromosome"/>
</dbReference>
<dbReference type="GO" id="GO:0005829">
    <property type="term" value="C:cytosol"/>
    <property type="evidence" value="ECO:0007669"/>
    <property type="project" value="TreeGrafter"/>
</dbReference>
<dbReference type="GO" id="GO:0005525">
    <property type="term" value="F:GTP binding"/>
    <property type="evidence" value="ECO:0007669"/>
    <property type="project" value="UniProtKB-UniRule"/>
</dbReference>
<dbReference type="GO" id="GO:0003924">
    <property type="term" value="F:GTPase activity"/>
    <property type="evidence" value="ECO:0007669"/>
    <property type="project" value="InterPro"/>
</dbReference>
<dbReference type="GO" id="GO:0016150">
    <property type="term" value="F:translation release factor activity, codon nonspecific"/>
    <property type="evidence" value="ECO:0007669"/>
    <property type="project" value="TreeGrafter"/>
</dbReference>
<dbReference type="GO" id="GO:0016149">
    <property type="term" value="F:translation release factor activity, codon specific"/>
    <property type="evidence" value="ECO:0007669"/>
    <property type="project" value="UniProtKB-UniRule"/>
</dbReference>
<dbReference type="GO" id="GO:0006449">
    <property type="term" value="P:regulation of translational termination"/>
    <property type="evidence" value="ECO:0007669"/>
    <property type="project" value="UniProtKB-UniRule"/>
</dbReference>
<dbReference type="CDD" id="cd04169">
    <property type="entry name" value="RF3"/>
    <property type="match status" value="1"/>
</dbReference>
<dbReference type="CDD" id="cd16259">
    <property type="entry name" value="RF3_III"/>
    <property type="match status" value="1"/>
</dbReference>
<dbReference type="FunFam" id="2.40.30.10:FF:000040">
    <property type="entry name" value="Peptide chain release factor 3"/>
    <property type="match status" value="1"/>
</dbReference>
<dbReference type="FunFam" id="3.30.70.3280:FF:000001">
    <property type="entry name" value="Peptide chain release factor 3"/>
    <property type="match status" value="1"/>
</dbReference>
<dbReference type="FunFam" id="3.40.50.300:FF:000542">
    <property type="entry name" value="Peptide chain release factor 3"/>
    <property type="match status" value="1"/>
</dbReference>
<dbReference type="Gene3D" id="3.40.50.300">
    <property type="entry name" value="P-loop containing nucleotide triphosphate hydrolases"/>
    <property type="match status" value="1"/>
</dbReference>
<dbReference type="Gene3D" id="3.30.70.3280">
    <property type="entry name" value="Peptide chain release factor 3, domain III"/>
    <property type="match status" value="1"/>
</dbReference>
<dbReference type="Gene3D" id="2.40.30.10">
    <property type="entry name" value="Translation factors"/>
    <property type="match status" value="1"/>
</dbReference>
<dbReference type="HAMAP" id="MF_00072">
    <property type="entry name" value="Rel_fac_3"/>
    <property type="match status" value="1"/>
</dbReference>
<dbReference type="InterPro" id="IPR053905">
    <property type="entry name" value="EF-G-like_DII"/>
</dbReference>
<dbReference type="InterPro" id="IPR035647">
    <property type="entry name" value="EFG_III/V"/>
</dbReference>
<dbReference type="InterPro" id="IPR031157">
    <property type="entry name" value="G_TR_CS"/>
</dbReference>
<dbReference type="InterPro" id="IPR027417">
    <property type="entry name" value="P-loop_NTPase"/>
</dbReference>
<dbReference type="InterPro" id="IPR004548">
    <property type="entry name" value="PrfC"/>
</dbReference>
<dbReference type="InterPro" id="IPR032090">
    <property type="entry name" value="RF3_C"/>
</dbReference>
<dbReference type="InterPro" id="IPR038467">
    <property type="entry name" value="RF3_dom_3_sf"/>
</dbReference>
<dbReference type="InterPro" id="IPR041732">
    <property type="entry name" value="RF3_GTP-bd"/>
</dbReference>
<dbReference type="InterPro" id="IPR005225">
    <property type="entry name" value="Small_GTP-bd"/>
</dbReference>
<dbReference type="InterPro" id="IPR000795">
    <property type="entry name" value="T_Tr_GTP-bd_dom"/>
</dbReference>
<dbReference type="InterPro" id="IPR009000">
    <property type="entry name" value="Transl_B-barrel_sf"/>
</dbReference>
<dbReference type="NCBIfam" id="TIGR00503">
    <property type="entry name" value="prfC"/>
    <property type="match status" value="1"/>
</dbReference>
<dbReference type="NCBIfam" id="NF001964">
    <property type="entry name" value="PRK00741.1"/>
    <property type="match status" value="1"/>
</dbReference>
<dbReference type="NCBIfam" id="TIGR00231">
    <property type="entry name" value="small_GTP"/>
    <property type="match status" value="1"/>
</dbReference>
<dbReference type="PANTHER" id="PTHR43556">
    <property type="entry name" value="PEPTIDE CHAIN RELEASE FACTOR RF3"/>
    <property type="match status" value="1"/>
</dbReference>
<dbReference type="PANTHER" id="PTHR43556:SF2">
    <property type="entry name" value="PEPTIDE CHAIN RELEASE FACTOR RF3"/>
    <property type="match status" value="1"/>
</dbReference>
<dbReference type="Pfam" id="PF22042">
    <property type="entry name" value="EF-G_D2"/>
    <property type="match status" value="1"/>
</dbReference>
<dbReference type="Pfam" id="PF00009">
    <property type="entry name" value="GTP_EFTU"/>
    <property type="match status" value="1"/>
</dbReference>
<dbReference type="Pfam" id="PF16658">
    <property type="entry name" value="RF3_C"/>
    <property type="match status" value="1"/>
</dbReference>
<dbReference type="PRINTS" id="PR00315">
    <property type="entry name" value="ELONGATNFCT"/>
</dbReference>
<dbReference type="SUPFAM" id="SSF54980">
    <property type="entry name" value="EF-G C-terminal domain-like"/>
    <property type="match status" value="1"/>
</dbReference>
<dbReference type="SUPFAM" id="SSF52540">
    <property type="entry name" value="P-loop containing nucleoside triphosphate hydrolases"/>
    <property type="match status" value="1"/>
</dbReference>
<dbReference type="SUPFAM" id="SSF50447">
    <property type="entry name" value="Translation proteins"/>
    <property type="match status" value="1"/>
</dbReference>
<dbReference type="PROSITE" id="PS00301">
    <property type="entry name" value="G_TR_1"/>
    <property type="match status" value="1"/>
</dbReference>
<dbReference type="PROSITE" id="PS51722">
    <property type="entry name" value="G_TR_2"/>
    <property type="match status" value="1"/>
</dbReference>
<accession>Q8CPR1</accession>
<gene>
    <name evidence="1" type="primary">prfC</name>
    <name type="ordered locus">SE_0720</name>
</gene>